<sequence>MANITAQMVKELREKTGAGMMDCKKALVETEGDMEKAIDYLREKGIAKAAKKSDRVASEGMTHVISNEKHAVVLEVNAETDFVAKNDNFQQLVDALAKQILAVRPDSLEDALKTEMPNGQTVQDYITEAITKIGENISLRRFEVKEKADNSAFGEYIHMNGRIGVLTLLEGTTDTTVAKDVAMHIAAINPKYISREDVSTEEVEHEKEVLTQQALNEGKPANIVEKMVEGRLKKYLSEISLEDQPFVKNPDITVGDYVKQSGGKVVSFVRFEVGEGIEKKEDNFVEEVMSQVKK</sequence>
<dbReference type="EMBL" id="FM242711">
    <property type="protein sequence ID" value="CAS05428.1"/>
    <property type="molecule type" value="Genomic_DNA"/>
</dbReference>
<dbReference type="RefSeq" id="WP_003726264.1">
    <property type="nucleotide sequence ID" value="NC_012488.1"/>
</dbReference>
<dbReference type="SMR" id="C1KVV3"/>
<dbReference type="KEGG" id="lmc:Lm4b_01667"/>
<dbReference type="HOGENOM" id="CLU_047155_0_2_9"/>
<dbReference type="GO" id="GO:0005737">
    <property type="term" value="C:cytoplasm"/>
    <property type="evidence" value="ECO:0007669"/>
    <property type="project" value="UniProtKB-SubCell"/>
</dbReference>
<dbReference type="GO" id="GO:0003746">
    <property type="term" value="F:translation elongation factor activity"/>
    <property type="evidence" value="ECO:0007669"/>
    <property type="project" value="UniProtKB-UniRule"/>
</dbReference>
<dbReference type="CDD" id="cd14275">
    <property type="entry name" value="UBA_EF-Ts"/>
    <property type="match status" value="1"/>
</dbReference>
<dbReference type="FunFam" id="1.10.286.20:FF:000003">
    <property type="entry name" value="Elongation factor Ts"/>
    <property type="match status" value="1"/>
</dbReference>
<dbReference type="FunFam" id="1.10.8.10:FF:000001">
    <property type="entry name" value="Elongation factor Ts"/>
    <property type="match status" value="1"/>
</dbReference>
<dbReference type="FunFam" id="3.30.479.20:FF:000005">
    <property type="entry name" value="Elongation factor Ts"/>
    <property type="match status" value="1"/>
</dbReference>
<dbReference type="Gene3D" id="1.10.286.20">
    <property type="match status" value="1"/>
</dbReference>
<dbReference type="Gene3D" id="1.10.8.10">
    <property type="entry name" value="DNA helicase RuvA subunit, C-terminal domain"/>
    <property type="match status" value="1"/>
</dbReference>
<dbReference type="Gene3D" id="3.30.479.20">
    <property type="entry name" value="Elongation factor Ts, dimerisation domain"/>
    <property type="match status" value="2"/>
</dbReference>
<dbReference type="HAMAP" id="MF_00050">
    <property type="entry name" value="EF_Ts"/>
    <property type="match status" value="1"/>
</dbReference>
<dbReference type="InterPro" id="IPR036402">
    <property type="entry name" value="EF-Ts_dimer_sf"/>
</dbReference>
<dbReference type="InterPro" id="IPR001816">
    <property type="entry name" value="Transl_elong_EFTs/EF1B"/>
</dbReference>
<dbReference type="InterPro" id="IPR014039">
    <property type="entry name" value="Transl_elong_EFTs/EF1B_dimer"/>
</dbReference>
<dbReference type="InterPro" id="IPR018101">
    <property type="entry name" value="Transl_elong_Ts_CS"/>
</dbReference>
<dbReference type="InterPro" id="IPR009060">
    <property type="entry name" value="UBA-like_sf"/>
</dbReference>
<dbReference type="NCBIfam" id="TIGR00116">
    <property type="entry name" value="tsf"/>
    <property type="match status" value="1"/>
</dbReference>
<dbReference type="PANTHER" id="PTHR11741">
    <property type="entry name" value="ELONGATION FACTOR TS"/>
    <property type="match status" value="1"/>
</dbReference>
<dbReference type="PANTHER" id="PTHR11741:SF0">
    <property type="entry name" value="ELONGATION FACTOR TS, MITOCHONDRIAL"/>
    <property type="match status" value="1"/>
</dbReference>
<dbReference type="Pfam" id="PF00889">
    <property type="entry name" value="EF_TS"/>
    <property type="match status" value="1"/>
</dbReference>
<dbReference type="SUPFAM" id="SSF54713">
    <property type="entry name" value="Elongation factor Ts (EF-Ts), dimerisation domain"/>
    <property type="match status" value="2"/>
</dbReference>
<dbReference type="SUPFAM" id="SSF46934">
    <property type="entry name" value="UBA-like"/>
    <property type="match status" value="1"/>
</dbReference>
<dbReference type="PROSITE" id="PS01126">
    <property type="entry name" value="EF_TS_1"/>
    <property type="match status" value="1"/>
</dbReference>
<dbReference type="PROSITE" id="PS01127">
    <property type="entry name" value="EF_TS_2"/>
    <property type="match status" value="1"/>
</dbReference>
<comment type="function">
    <text evidence="1">Associates with the EF-Tu.GDP complex and induces the exchange of GDP to GTP. It remains bound to the aminoacyl-tRNA.EF-Tu.GTP complex up to the GTP hydrolysis stage on the ribosome.</text>
</comment>
<comment type="subcellular location">
    <subcellularLocation>
        <location evidence="1">Cytoplasm</location>
    </subcellularLocation>
</comment>
<comment type="similarity">
    <text evidence="1">Belongs to the EF-Ts family.</text>
</comment>
<reference key="1">
    <citation type="journal article" date="2012" name="BMC Genomics">
        <title>Comparative genomics and transcriptomics of lineages I, II, and III strains of Listeria monocytogenes.</title>
        <authorList>
            <person name="Hain T."/>
            <person name="Ghai R."/>
            <person name="Billion A."/>
            <person name="Kuenne C.T."/>
            <person name="Steinweg C."/>
            <person name="Izar B."/>
            <person name="Mohamed W."/>
            <person name="Mraheil M."/>
            <person name="Domann E."/>
            <person name="Schaffrath S."/>
            <person name="Karst U."/>
            <person name="Goesmann A."/>
            <person name="Oehm S."/>
            <person name="Puhler A."/>
            <person name="Merkl R."/>
            <person name="Vorwerk S."/>
            <person name="Glaser P."/>
            <person name="Garrido P."/>
            <person name="Rusniok C."/>
            <person name="Buchrieser C."/>
            <person name="Goebel W."/>
            <person name="Chakraborty T."/>
        </authorList>
    </citation>
    <scope>NUCLEOTIDE SEQUENCE [LARGE SCALE GENOMIC DNA]</scope>
    <source>
        <strain>CLIP80459</strain>
    </source>
</reference>
<organism>
    <name type="scientific">Listeria monocytogenes serotype 4b (strain CLIP80459)</name>
    <dbReference type="NCBI Taxonomy" id="568819"/>
    <lineage>
        <taxon>Bacteria</taxon>
        <taxon>Bacillati</taxon>
        <taxon>Bacillota</taxon>
        <taxon>Bacilli</taxon>
        <taxon>Bacillales</taxon>
        <taxon>Listeriaceae</taxon>
        <taxon>Listeria</taxon>
    </lineage>
</organism>
<proteinExistence type="inferred from homology"/>
<feature type="chain" id="PRO_1000202245" description="Elongation factor Ts">
    <location>
        <begin position="1"/>
        <end position="294"/>
    </location>
</feature>
<feature type="region of interest" description="Involved in Mg(2+) ion dislocation from EF-Tu" evidence="1">
    <location>
        <begin position="80"/>
        <end position="83"/>
    </location>
</feature>
<accession>C1KVV3</accession>
<name>EFTS_LISMC</name>
<evidence type="ECO:0000255" key="1">
    <source>
        <dbReference type="HAMAP-Rule" id="MF_00050"/>
    </source>
</evidence>
<keyword id="KW-0963">Cytoplasm</keyword>
<keyword id="KW-0251">Elongation factor</keyword>
<keyword id="KW-0648">Protein biosynthesis</keyword>
<gene>
    <name evidence="1" type="primary">tsf</name>
    <name type="ordered locus">Lm4b_01667</name>
</gene>
<protein>
    <recommendedName>
        <fullName evidence="1">Elongation factor Ts</fullName>
        <shortName evidence="1">EF-Ts</shortName>
    </recommendedName>
</protein>